<keyword id="KW-0030">Aminoacyl-tRNA synthetase</keyword>
<keyword id="KW-0067">ATP-binding</keyword>
<keyword id="KW-0963">Cytoplasm</keyword>
<keyword id="KW-0436">Ligase</keyword>
<keyword id="KW-0460">Magnesium</keyword>
<keyword id="KW-0479">Metal-binding</keyword>
<keyword id="KW-0547">Nucleotide-binding</keyword>
<keyword id="KW-0648">Protein biosynthesis</keyword>
<sequence length="501" mass="57662">MFSNQYIQQRIHKANSLREEGKNPYQNGLKRSLTNAAFLEKYAYVKDLEEPKDKEKCESIVGRVKLLRLMGKACFIKVEDESAILQAYVSQNELNDEFKSLKKHLEVGDIVLVKGFPFATKTGELSVHALEFHILSKTIVPLPEKFHGLSDIELRYRQRYLDLIVNPGVKDVFKKRSLIVSSVRKFFEMEGFLEVETPMMHPIPGGANARPFITYHNALEVERYLRIAPELYLKRLIVGGFEAVFEINRNFRNEGMDHSHNPEFTMIEFYWAYHTYEDLIELSKRLFDYLLKTLNLPSKIIYNDMEVDFNQTSVISYLDALETIGGISKDILEKEDRLLAYLLEQGIKVEPNLTYGKLLAEAFDHFVEHQLINPTFVTQYPIEISPLARRNDSNPNIADRFELFIAGKEIANGFSELNDPLDQLERFKNQVAEKEKGDEEAQYMDEDYVWALAHGMPPTAGQGIGIDRLVMLLTGAKSIKDVILFPAMRPVKNDFNIESGE</sequence>
<gene>
    <name evidence="1" type="primary">lysS</name>
    <name type="ordered locus">HPAG1_0179</name>
</gene>
<organism>
    <name type="scientific">Helicobacter pylori (strain HPAG1)</name>
    <dbReference type="NCBI Taxonomy" id="357544"/>
    <lineage>
        <taxon>Bacteria</taxon>
        <taxon>Pseudomonadati</taxon>
        <taxon>Campylobacterota</taxon>
        <taxon>Epsilonproteobacteria</taxon>
        <taxon>Campylobacterales</taxon>
        <taxon>Helicobacteraceae</taxon>
        <taxon>Helicobacter</taxon>
    </lineage>
</organism>
<evidence type="ECO:0000255" key="1">
    <source>
        <dbReference type="HAMAP-Rule" id="MF_00252"/>
    </source>
</evidence>
<proteinExistence type="inferred from homology"/>
<protein>
    <recommendedName>
        <fullName evidence="1">Lysine--tRNA ligase</fullName>
        <ecNumber evidence="1">6.1.1.6</ecNumber>
    </recommendedName>
    <alternativeName>
        <fullName evidence="1">Lysyl-tRNA synthetase</fullName>
        <shortName evidence="1">LysRS</shortName>
    </alternativeName>
</protein>
<feature type="chain" id="PRO_1000012877" description="Lysine--tRNA ligase">
    <location>
        <begin position="1"/>
        <end position="501"/>
    </location>
</feature>
<feature type="binding site" evidence="1">
    <location>
        <position position="402"/>
    </location>
    <ligand>
        <name>Mg(2+)</name>
        <dbReference type="ChEBI" id="CHEBI:18420"/>
        <label>1</label>
    </ligand>
</feature>
<feature type="binding site" evidence="1">
    <location>
        <position position="409"/>
    </location>
    <ligand>
        <name>Mg(2+)</name>
        <dbReference type="ChEBI" id="CHEBI:18420"/>
        <label>1</label>
    </ligand>
</feature>
<feature type="binding site" evidence="1">
    <location>
        <position position="409"/>
    </location>
    <ligand>
        <name>Mg(2+)</name>
        <dbReference type="ChEBI" id="CHEBI:18420"/>
        <label>2</label>
    </ligand>
</feature>
<reference key="1">
    <citation type="journal article" date="2006" name="Proc. Natl. Acad. Sci. U.S.A.">
        <title>The complete genome sequence of a chronic atrophic gastritis Helicobacter pylori strain: evolution during disease progression.</title>
        <authorList>
            <person name="Oh J.D."/>
            <person name="Kling-Baeckhed H."/>
            <person name="Giannakis M."/>
            <person name="Xu J."/>
            <person name="Fulton R.S."/>
            <person name="Fulton L.A."/>
            <person name="Cordum H.S."/>
            <person name="Wang C."/>
            <person name="Elliott G."/>
            <person name="Edwards J."/>
            <person name="Mardis E.R."/>
            <person name="Engstrand L.G."/>
            <person name="Gordon J.I."/>
        </authorList>
    </citation>
    <scope>NUCLEOTIDE SEQUENCE [LARGE SCALE GENOMIC DNA]</scope>
    <source>
        <strain>HPAG1</strain>
    </source>
</reference>
<comment type="catalytic activity">
    <reaction evidence="1">
        <text>tRNA(Lys) + L-lysine + ATP = L-lysyl-tRNA(Lys) + AMP + diphosphate</text>
        <dbReference type="Rhea" id="RHEA:20792"/>
        <dbReference type="Rhea" id="RHEA-COMP:9696"/>
        <dbReference type="Rhea" id="RHEA-COMP:9697"/>
        <dbReference type="ChEBI" id="CHEBI:30616"/>
        <dbReference type="ChEBI" id="CHEBI:32551"/>
        <dbReference type="ChEBI" id="CHEBI:33019"/>
        <dbReference type="ChEBI" id="CHEBI:78442"/>
        <dbReference type="ChEBI" id="CHEBI:78529"/>
        <dbReference type="ChEBI" id="CHEBI:456215"/>
        <dbReference type="EC" id="6.1.1.6"/>
    </reaction>
</comment>
<comment type="cofactor">
    <cofactor evidence="1">
        <name>Mg(2+)</name>
        <dbReference type="ChEBI" id="CHEBI:18420"/>
    </cofactor>
    <text evidence="1">Binds 3 Mg(2+) ions per subunit.</text>
</comment>
<comment type="subunit">
    <text evidence="1">Homodimer.</text>
</comment>
<comment type="subcellular location">
    <subcellularLocation>
        <location evidence="1">Cytoplasm</location>
    </subcellularLocation>
</comment>
<comment type="similarity">
    <text evidence="1">Belongs to the class-II aminoacyl-tRNA synthetase family.</text>
</comment>
<name>SYK_HELPH</name>
<accession>Q1CUX6</accession>
<dbReference type="EC" id="6.1.1.6" evidence="1"/>
<dbReference type="EMBL" id="CP000241">
    <property type="protein sequence ID" value="ABF84246.1"/>
    <property type="molecule type" value="Genomic_DNA"/>
</dbReference>
<dbReference type="RefSeq" id="WP_000492563.1">
    <property type="nucleotide sequence ID" value="NC_008086.1"/>
</dbReference>
<dbReference type="SMR" id="Q1CUX6"/>
<dbReference type="KEGG" id="hpa:HPAG1_0179"/>
<dbReference type="HOGENOM" id="CLU_008255_6_0_7"/>
<dbReference type="GO" id="GO:0005829">
    <property type="term" value="C:cytosol"/>
    <property type="evidence" value="ECO:0007669"/>
    <property type="project" value="TreeGrafter"/>
</dbReference>
<dbReference type="GO" id="GO:0005524">
    <property type="term" value="F:ATP binding"/>
    <property type="evidence" value="ECO:0007669"/>
    <property type="project" value="UniProtKB-UniRule"/>
</dbReference>
<dbReference type="GO" id="GO:0004824">
    <property type="term" value="F:lysine-tRNA ligase activity"/>
    <property type="evidence" value="ECO:0007669"/>
    <property type="project" value="UniProtKB-UniRule"/>
</dbReference>
<dbReference type="GO" id="GO:0000287">
    <property type="term" value="F:magnesium ion binding"/>
    <property type="evidence" value="ECO:0007669"/>
    <property type="project" value="UniProtKB-UniRule"/>
</dbReference>
<dbReference type="GO" id="GO:0000049">
    <property type="term" value="F:tRNA binding"/>
    <property type="evidence" value="ECO:0007669"/>
    <property type="project" value="TreeGrafter"/>
</dbReference>
<dbReference type="GO" id="GO:0006430">
    <property type="term" value="P:lysyl-tRNA aminoacylation"/>
    <property type="evidence" value="ECO:0007669"/>
    <property type="project" value="UniProtKB-UniRule"/>
</dbReference>
<dbReference type="CDD" id="cd00775">
    <property type="entry name" value="LysRS_core"/>
    <property type="match status" value="1"/>
</dbReference>
<dbReference type="CDD" id="cd04322">
    <property type="entry name" value="LysRS_N"/>
    <property type="match status" value="1"/>
</dbReference>
<dbReference type="FunFam" id="3.30.930.10:FF:000164">
    <property type="entry name" value="Lysine--tRNA ligase"/>
    <property type="match status" value="1"/>
</dbReference>
<dbReference type="Gene3D" id="3.30.930.10">
    <property type="entry name" value="Bira Bifunctional Protein, Domain 2"/>
    <property type="match status" value="1"/>
</dbReference>
<dbReference type="Gene3D" id="2.40.50.140">
    <property type="entry name" value="Nucleic acid-binding proteins"/>
    <property type="match status" value="1"/>
</dbReference>
<dbReference type="HAMAP" id="MF_00252">
    <property type="entry name" value="Lys_tRNA_synth_class2"/>
    <property type="match status" value="1"/>
</dbReference>
<dbReference type="InterPro" id="IPR004364">
    <property type="entry name" value="Aa-tRNA-synt_II"/>
</dbReference>
<dbReference type="InterPro" id="IPR006195">
    <property type="entry name" value="aa-tRNA-synth_II"/>
</dbReference>
<dbReference type="InterPro" id="IPR045864">
    <property type="entry name" value="aa-tRNA-synth_II/BPL/LPL"/>
</dbReference>
<dbReference type="InterPro" id="IPR002313">
    <property type="entry name" value="Lys-tRNA-ligase_II"/>
</dbReference>
<dbReference type="InterPro" id="IPR044136">
    <property type="entry name" value="Lys-tRNA-ligase_II_N"/>
</dbReference>
<dbReference type="InterPro" id="IPR018149">
    <property type="entry name" value="Lys-tRNA-synth_II_C"/>
</dbReference>
<dbReference type="InterPro" id="IPR012340">
    <property type="entry name" value="NA-bd_OB-fold"/>
</dbReference>
<dbReference type="InterPro" id="IPR004365">
    <property type="entry name" value="NA-bd_OB_tRNA"/>
</dbReference>
<dbReference type="NCBIfam" id="TIGR00499">
    <property type="entry name" value="lysS_bact"/>
    <property type="match status" value="1"/>
</dbReference>
<dbReference type="NCBIfam" id="NF001756">
    <property type="entry name" value="PRK00484.1"/>
    <property type="match status" value="1"/>
</dbReference>
<dbReference type="PANTHER" id="PTHR42918:SF15">
    <property type="entry name" value="LYSINE--TRNA LIGASE, CHLOROPLASTIC_MITOCHONDRIAL"/>
    <property type="match status" value="1"/>
</dbReference>
<dbReference type="PANTHER" id="PTHR42918">
    <property type="entry name" value="LYSYL-TRNA SYNTHETASE"/>
    <property type="match status" value="1"/>
</dbReference>
<dbReference type="Pfam" id="PF00152">
    <property type="entry name" value="tRNA-synt_2"/>
    <property type="match status" value="1"/>
</dbReference>
<dbReference type="Pfam" id="PF01336">
    <property type="entry name" value="tRNA_anti-codon"/>
    <property type="match status" value="1"/>
</dbReference>
<dbReference type="PRINTS" id="PR00982">
    <property type="entry name" value="TRNASYNTHLYS"/>
</dbReference>
<dbReference type="SUPFAM" id="SSF55681">
    <property type="entry name" value="Class II aaRS and biotin synthetases"/>
    <property type="match status" value="1"/>
</dbReference>
<dbReference type="SUPFAM" id="SSF50249">
    <property type="entry name" value="Nucleic acid-binding proteins"/>
    <property type="match status" value="1"/>
</dbReference>
<dbReference type="PROSITE" id="PS50862">
    <property type="entry name" value="AA_TRNA_LIGASE_II"/>
    <property type="match status" value="1"/>
</dbReference>